<name>SMUG1_XENLA</name>
<feature type="chain" id="PRO_0000071995" description="Single-strand selective monofunctional uracil DNA glycosylase">
    <location>
        <begin position="1"/>
        <end position="281"/>
    </location>
</feature>
<feature type="region of interest" description="DNA-binding">
    <location>
        <begin position="182"/>
        <end position="198"/>
    </location>
</feature>
<feature type="binding site">
    <location>
        <position position="95"/>
    </location>
    <ligand>
        <name>substrate</name>
    </ligand>
</feature>
<feature type="binding site">
    <location>
        <position position="109"/>
    </location>
    <ligand>
        <name>substrate</name>
    </ligand>
</feature>
<feature type="binding site">
    <location>
        <position position="174"/>
    </location>
    <ligand>
        <name>substrate</name>
    </ligand>
</feature>
<feature type="binding site">
    <location>
        <position position="250"/>
    </location>
    <ligand>
        <name>substrate</name>
    </ligand>
</feature>
<feature type="helix" evidence="3">
    <location>
        <begin position="39"/>
        <end position="54"/>
    </location>
</feature>
<feature type="strand" evidence="3">
    <location>
        <begin position="64"/>
        <end position="66"/>
    </location>
</feature>
<feature type="helix" evidence="3">
    <location>
        <begin position="68"/>
        <end position="71"/>
    </location>
</feature>
<feature type="helix" evidence="3">
    <location>
        <begin position="73"/>
        <end position="83"/>
    </location>
</feature>
<feature type="strand" evidence="3">
    <location>
        <begin position="89"/>
        <end position="96"/>
    </location>
</feature>
<feature type="turn" evidence="3">
    <location>
        <begin position="99"/>
        <end position="101"/>
    </location>
</feature>
<feature type="helix" evidence="3">
    <location>
        <begin position="102"/>
        <end position="105"/>
    </location>
</feature>
<feature type="helix" evidence="3">
    <location>
        <begin position="112"/>
        <end position="117"/>
    </location>
</feature>
<feature type="helix" evidence="3">
    <location>
        <begin position="139"/>
        <end position="141"/>
    </location>
</feature>
<feature type="helix" evidence="3">
    <location>
        <begin position="147"/>
        <end position="160"/>
    </location>
</feature>
<feature type="helix" evidence="3">
    <location>
        <begin position="163"/>
        <end position="167"/>
    </location>
</feature>
<feature type="strand" evidence="3">
    <location>
        <begin position="170"/>
        <end position="175"/>
    </location>
</feature>
<feature type="strand" evidence="3">
    <location>
        <begin position="179"/>
        <end position="181"/>
    </location>
</feature>
<feature type="helix" evidence="3">
    <location>
        <begin position="190"/>
        <end position="192"/>
    </location>
</feature>
<feature type="helix" evidence="3">
    <location>
        <begin position="195"/>
        <end position="216"/>
    </location>
</feature>
<feature type="strand" evidence="3">
    <location>
        <begin position="219"/>
        <end position="225"/>
    </location>
</feature>
<feature type="helix" evidence="3">
    <location>
        <begin position="226"/>
        <end position="238"/>
    </location>
</feature>
<feature type="strand" evidence="3">
    <location>
        <begin position="244"/>
        <end position="248"/>
    </location>
</feature>
<feature type="helix" evidence="3">
    <location>
        <begin position="256"/>
        <end position="258"/>
    </location>
</feature>
<feature type="turn" evidence="3">
    <location>
        <begin position="259"/>
        <end position="261"/>
    </location>
</feature>
<feature type="helix" evidence="3">
    <location>
        <begin position="262"/>
        <end position="273"/>
    </location>
</feature>
<feature type="helix" evidence="3">
    <location>
        <begin position="276"/>
        <end position="279"/>
    </location>
</feature>
<proteinExistence type="evidence at protein level"/>
<sequence length="281" mass="31228">MAAEACVPAEFSKDEKNGSILSAFCSDIPDITSSTESPADSFLKVELELNLKLSNLVFQDPVQYVYNPLVYAWAPHENYVQTYCKSKKEVLFLGMNPGPFGMAQTGVPFGEVNHVRDWLQIEGPVSKPEVEHPKRRIRGFECPQSEVSGARFWSLFKSLCGQPETFFKHCFVHNHCPLIFMNHSGKNLTPTDLPKAQRDTLLEICDEALCQAVRVLGVKLVIGVGRFSEQRARKALMAEGIDVTVKGIMHPSPRNPQANKGWEGIVRGQLLELGVLSLLTG</sequence>
<comment type="function">
    <text evidence="2">Recognizes base lesions in the genome and initiates base excision DNA repair. Acts as a monofunctional DNA glycosylase specific for uracil (U) residues in DNA with a preference for single-stranded DNA substrates. Does not exhibit any enzymatic activity towards G/T mismatches.</text>
</comment>
<comment type="subcellular location">
    <subcellularLocation>
        <location evidence="1">Nucleus</location>
    </subcellularLocation>
</comment>
<comment type="similarity">
    <text>Belongs to the uracil-DNA glycosylase (UDG) superfamily. SMUG1 family.</text>
</comment>
<keyword id="KW-0002">3D-structure</keyword>
<keyword id="KW-0227">DNA damage</keyword>
<keyword id="KW-0234">DNA repair</keyword>
<keyword id="KW-0238">DNA-binding</keyword>
<keyword id="KW-0378">Hydrolase</keyword>
<keyword id="KW-0539">Nucleus</keyword>
<keyword id="KW-1185">Reference proteome</keyword>
<dbReference type="EC" id="3.2.2.-"/>
<dbReference type="EMBL" id="AF125181">
    <property type="protein sequence ID" value="AAD17300.1"/>
    <property type="molecule type" value="mRNA"/>
</dbReference>
<dbReference type="EMBL" id="BC090216">
    <property type="protein sequence ID" value="AAH90216.1"/>
    <property type="molecule type" value="mRNA"/>
</dbReference>
<dbReference type="RefSeq" id="NP_001083825.1">
    <property type="nucleotide sequence ID" value="NM_001090356.1"/>
</dbReference>
<dbReference type="PDB" id="1OE4">
    <property type="method" value="X-ray"/>
    <property type="resolution" value="2.00 A"/>
    <property type="chains" value="A/B=35-281"/>
</dbReference>
<dbReference type="PDB" id="1OE5">
    <property type="method" value="X-ray"/>
    <property type="resolution" value="2.30 A"/>
    <property type="chains" value="A/B=35-281"/>
</dbReference>
<dbReference type="PDB" id="1OE6">
    <property type="method" value="X-ray"/>
    <property type="resolution" value="2.65 A"/>
    <property type="chains" value="A/B=35-281"/>
</dbReference>
<dbReference type="PDBsum" id="1OE4"/>
<dbReference type="PDBsum" id="1OE5"/>
<dbReference type="PDBsum" id="1OE6"/>
<dbReference type="SMR" id="Q9YGN6"/>
<dbReference type="DNASU" id="399139"/>
<dbReference type="GeneID" id="399139"/>
<dbReference type="KEGG" id="xla:399139"/>
<dbReference type="AGR" id="Xenbase:XB-GENE-953126"/>
<dbReference type="CTD" id="399139"/>
<dbReference type="Xenbase" id="XB-GENE-953126">
    <property type="gene designation" value="smug1.L"/>
</dbReference>
<dbReference type="OrthoDB" id="408702at2759"/>
<dbReference type="EvolutionaryTrace" id="Q9YGN6"/>
<dbReference type="Proteomes" id="UP000186698">
    <property type="component" value="Chromosome 2L"/>
</dbReference>
<dbReference type="Bgee" id="399139">
    <property type="expression patterns" value="Expressed in neurula embryo and 19 other cell types or tissues"/>
</dbReference>
<dbReference type="GO" id="GO:0005634">
    <property type="term" value="C:nucleus"/>
    <property type="evidence" value="ECO:0007669"/>
    <property type="project" value="UniProtKB-SubCell"/>
</dbReference>
<dbReference type="GO" id="GO:0003677">
    <property type="term" value="F:DNA binding"/>
    <property type="evidence" value="ECO:0007669"/>
    <property type="project" value="UniProtKB-KW"/>
</dbReference>
<dbReference type="GO" id="GO:0000703">
    <property type="term" value="F:oxidized pyrimidine nucleobase lesion DNA N-glycosylase activity"/>
    <property type="evidence" value="ECO:0000318"/>
    <property type="project" value="GO_Central"/>
</dbReference>
<dbReference type="GO" id="GO:0017065">
    <property type="term" value="F:single-strand selective uracil DNA N-glycosylase activity"/>
    <property type="evidence" value="ECO:0007669"/>
    <property type="project" value="InterPro"/>
</dbReference>
<dbReference type="GO" id="GO:0004844">
    <property type="term" value="F:uracil DNA N-glycosylase activity"/>
    <property type="evidence" value="ECO:0000318"/>
    <property type="project" value="GO_Central"/>
</dbReference>
<dbReference type="GO" id="GO:0006284">
    <property type="term" value="P:base-excision repair"/>
    <property type="evidence" value="ECO:0007669"/>
    <property type="project" value="InterPro"/>
</dbReference>
<dbReference type="CDD" id="cd19374">
    <property type="entry name" value="UDG-F3_SMUG1-like"/>
    <property type="match status" value="1"/>
</dbReference>
<dbReference type="FunFam" id="3.40.470.10:FF:000005">
    <property type="entry name" value="Single-strand selective monofunctional uracil DNA glycosylase"/>
    <property type="match status" value="1"/>
</dbReference>
<dbReference type="Gene3D" id="3.40.470.10">
    <property type="entry name" value="Uracil-DNA glycosylase-like domain"/>
    <property type="match status" value="1"/>
</dbReference>
<dbReference type="InterPro" id="IPR039134">
    <property type="entry name" value="SMUG1"/>
</dbReference>
<dbReference type="InterPro" id="IPR005122">
    <property type="entry name" value="Uracil-DNA_glycosylase-like"/>
</dbReference>
<dbReference type="InterPro" id="IPR036895">
    <property type="entry name" value="Uracil-DNA_glycosylase-like_sf"/>
</dbReference>
<dbReference type="PANTHER" id="PTHR13235">
    <property type="entry name" value="SINGLE-STRAND SELECTIVE MONOFUNCTIONAL URACIL DNA GLYCOSYLASE"/>
    <property type="match status" value="1"/>
</dbReference>
<dbReference type="PANTHER" id="PTHR13235:SF2">
    <property type="entry name" value="SINGLE-STRAND SELECTIVE MONOFUNCTIONAL URACIL DNA GLYCOSYLASE"/>
    <property type="match status" value="1"/>
</dbReference>
<dbReference type="Pfam" id="PF03167">
    <property type="entry name" value="UDG"/>
    <property type="match status" value="1"/>
</dbReference>
<dbReference type="SUPFAM" id="SSF52141">
    <property type="entry name" value="Uracil-DNA glycosylase-like"/>
    <property type="match status" value="1"/>
</dbReference>
<gene>
    <name type="primary">smug1</name>
</gene>
<accession>Q9YGN6</accession>
<protein>
    <recommendedName>
        <fullName>Single-strand selective monofunctional uracil DNA glycosylase</fullName>
        <ecNumber>3.2.2.-</ecNumber>
    </recommendedName>
</protein>
<reference key="1">
    <citation type="journal article" date="1999" name="Curr. Biol.">
        <title>Identification of a new uracil-DNA glycosylase family by expression cloning using synthetic inhibitors.</title>
        <authorList>
            <person name="Haushalter K.A."/>
            <person name="Stukenberg P.T."/>
            <person name="Kirschner M.W."/>
            <person name="Verdine G.L."/>
        </authorList>
    </citation>
    <scope>NUCLEOTIDE SEQUENCE [MRNA]</scope>
    <scope>FUNCTION</scope>
    <source>
        <tissue>Embryo</tissue>
    </source>
</reference>
<reference key="2">
    <citation type="submission" date="2005-02" db="EMBL/GenBank/DDBJ databases">
        <authorList>
            <consortium name="NIH - Xenopus Gene Collection (XGC) project"/>
        </authorList>
    </citation>
    <scope>NUCLEOTIDE SEQUENCE [LARGE SCALE MRNA]</scope>
    <source>
        <tissue>Egg</tissue>
    </source>
</reference>
<reference key="3">
    <citation type="journal article" date="2003" name="Mol. Cell">
        <title>Structure and specificity of the vertebrate anti-mutator uracil-DNA glycosylase SMUG1.</title>
        <authorList>
            <person name="Wibley J.E.A."/>
            <person name="Waters T.R."/>
            <person name="Haushalter K."/>
            <person name="Verdine G.L."/>
            <person name="Pearl L.H."/>
        </authorList>
    </citation>
    <scope>X-RAY CRYSTALLOGRAPHY (2.0 ANGSTROMS) OF 35-281 IN COMPLEX WITH A DOUBLE-STRANDED DNA CONTAINING A G/U MISPAIR</scope>
</reference>
<organism>
    <name type="scientific">Xenopus laevis</name>
    <name type="common">African clawed frog</name>
    <dbReference type="NCBI Taxonomy" id="8355"/>
    <lineage>
        <taxon>Eukaryota</taxon>
        <taxon>Metazoa</taxon>
        <taxon>Chordata</taxon>
        <taxon>Craniata</taxon>
        <taxon>Vertebrata</taxon>
        <taxon>Euteleostomi</taxon>
        <taxon>Amphibia</taxon>
        <taxon>Batrachia</taxon>
        <taxon>Anura</taxon>
        <taxon>Pipoidea</taxon>
        <taxon>Pipidae</taxon>
        <taxon>Xenopodinae</taxon>
        <taxon>Xenopus</taxon>
        <taxon>Xenopus</taxon>
    </lineage>
</organism>
<evidence type="ECO:0000250" key="1"/>
<evidence type="ECO:0000269" key="2">
    <source>
    </source>
</evidence>
<evidence type="ECO:0007829" key="3">
    <source>
        <dbReference type="PDB" id="1OE4"/>
    </source>
</evidence>